<proteinExistence type="inferred from homology"/>
<sequence>MNKKSIRDVEVKGKKVFVRVDFNVPLNENREITDDTRIRAALPTLQYLREQGAKLIVASHLGRPKGQFNEKYSLKPVAKRLAELLGIEVKMAPDVVGPEVEKMAGELRPGEVLLLENVRFYPEEEKNDPEFARKLARLAEIFVSDAFGAAHRAHASTAGIASYLPAVAGFLMEKEINFLSRALNNPERPFVAIIGGAKVSDKIGVIENLLGKVDVLLIGGGMANTFLKAMGYETGKSLVEEDKVNLAGELMNKAKEVGVKLLLPSDVVVAPRIEAGVPSKIVAVDSIPAEEMALDIGEKTAKHFREEILKAKTVVWNGPMGVFEVEPFDRGTVAVAEAVAESGALSVVGGGDSVAAVEKAGVADKITHISTGGGASLEFLEGKKLPGVEVLNDK</sequence>
<name>PGK_CARHZ</name>
<dbReference type="EC" id="2.7.2.3" evidence="1"/>
<dbReference type="EMBL" id="CP000141">
    <property type="protein sequence ID" value="ABB15471.1"/>
    <property type="molecule type" value="Genomic_DNA"/>
</dbReference>
<dbReference type="RefSeq" id="WP_011343229.1">
    <property type="nucleotide sequence ID" value="NC_007503.1"/>
</dbReference>
<dbReference type="SMR" id="Q3AFD1"/>
<dbReference type="FunCoup" id="Q3AFD1">
    <property type="interactions" value="386"/>
</dbReference>
<dbReference type="STRING" id="246194.CHY_0281"/>
<dbReference type="KEGG" id="chy:CHY_0281"/>
<dbReference type="eggNOG" id="COG0126">
    <property type="taxonomic scope" value="Bacteria"/>
</dbReference>
<dbReference type="HOGENOM" id="CLU_025427_0_2_9"/>
<dbReference type="InParanoid" id="Q3AFD1"/>
<dbReference type="OrthoDB" id="9808460at2"/>
<dbReference type="UniPathway" id="UPA00109">
    <property type="reaction ID" value="UER00185"/>
</dbReference>
<dbReference type="Proteomes" id="UP000002706">
    <property type="component" value="Chromosome"/>
</dbReference>
<dbReference type="GO" id="GO:0005829">
    <property type="term" value="C:cytosol"/>
    <property type="evidence" value="ECO:0007669"/>
    <property type="project" value="TreeGrafter"/>
</dbReference>
<dbReference type="GO" id="GO:0043531">
    <property type="term" value="F:ADP binding"/>
    <property type="evidence" value="ECO:0007669"/>
    <property type="project" value="TreeGrafter"/>
</dbReference>
<dbReference type="GO" id="GO:0005524">
    <property type="term" value="F:ATP binding"/>
    <property type="evidence" value="ECO:0007669"/>
    <property type="project" value="UniProtKB-KW"/>
</dbReference>
<dbReference type="GO" id="GO:0004618">
    <property type="term" value="F:phosphoglycerate kinase activity"/>
    <property type="evidence" value="ECO:0007669"/>
    <property type="project" value="UniProtKB-UniRule"/>
</dbReference>
<dbReference type="GO" id="GO:0006094">
    <property type="term" value="P:gluconeogenesis"/>
    <property type="evidence" value="ECO:0007669"/>
    <property type="project" value="TreeGrafter"/>
</dbReference>
<dbReference type="GO" id="GO:0006096">
    <property type="term" value="P:glycolytic process"/>
    <property type="evidence" value="ECO:0007669"/>
    <property type="project" value="UniProtKB-UniRule"/>
</dbReference>
<dbReference type="CDD" id="cd00318">
    <property type="entry name" value="Phosphoglycerate_kinase"/>
    <property type="match status" value="1"/>
</dbReference>
<dbReference type="FunFam" id="3.40.50.1260:FF:000002">
    <property type="entry name" value="Phosphoglycerate kinase"/>
    <property type="match status" value="1"/>
</dbReference>
<dbReference type="FunFam" id="3.40.50.1260:FF:000007">
    <property type="entry name" value="Phosphoglycerate kinase"/>
    <property type="match status" value="1"/>
</dbReference>
<dbReference type="Gene3D" id="3.40.50.1260">
    <property type="entry name" value="Phosphoglycerate kinase, N-terminal domain"/>
    <property type="match status" value="2"/>
</dbReference>
<dbReference type="HAMAP" id="MF_00145">
    <property type="entry name" value="Phosphoglyc_kinase"/>
    <property type="match status" value="1"/>
</dbReference>
<dbReference type="InterPro" id="IPR001576">
    <property type="entry name" value="Phosphoglycerate_kinase"/>
</dbReference>
<dbReference type="InterPro" id="IPR015911">
    <property type="entry name" value="Phosphoglycerate_kinase_CS"/>
</dbReference>
<dbReference type="InterPro" id="IPR015824">
    <property type="entry name" value="Phosphoglycerate_kinase_N"/>
</dbReference>
<dbReference type="InterPro" id="IPR036043">
    <property type="entry name" value="Phosphoglycerate_kinase_sf"/>
</dbReference>
<dbReference type="PANTHER" id="PTHR11406">
    <property type="entry name" value="PHOSPHOGLYCERATE KINASE"/>
    <property type="match status" value="1"/>
</dbReference>
<dbReference type="PANTHER" id="PTHR11406:SF23">
    <property type="entry name" value="PHOSPHOGLYCERATE KINASE 1, CHLOROPLASTIC-RELATED"/>
    <property type="match status" value="1"/>
</dbReference>
<dbReference type="Pfam" id="PF00162">
    <property type="entry name" value="PGK"/>
    <property type="match status" value="1"/>
</dbReference>
<dbReference type="PIRSF" id="PIRSF000724">
    <property type="entry name" value="Pgk"/>
    <property type="match status" value="1"/>
</dbReference>
<dbReference type="PRINTS" id="PR00477">
    <property type="entry name" value="PHGLYCKINASE"/>
</dbReference>
<dbReference type="SUPFAM" id="SSF53748">
    <property type="entry name" value="Phosphoglycerate kinase"/>
    <property type="match status" value="1"/>
</dbReference>
<dbReference type="PROSITE" id="PS00111">
    <property type="entry name" value="PGLYCERATE_KINASE"/>
    <property type="match status" value="1"/>
</dbReference>
<protein>
    <recommendedName>
        <fullName evidence="1">Phosphoglycerate kinase</fullName>
        <ecNumber evidence="1">2.7.2.3</ecNumber>
    </recommendedName>
</protein>
<gene>
    <name evidence="1" type="primary">pgk</name>
    <name type="ordered locus">CHY_0281</name>
</gene>
<reference key="1">
    <citation type="journal article" date="2005" name="PLoS Genet.">
        <title>Life in hot carbon monoxide: the complete genome sequence of Carboxydothermus hydrogenoformans Z-2901.</title>
        <authorList>
            <person name="Wu M."/>
            <person name="Ren Q."/>
            <person name="Durkin A.S."/>
            <person name="Daugherty S.C."/>
            <person name="Brinkac L.M."/>
            <person name="Dodson R.J."/>
            <person name="Madupu R."/>
            <person name="Sullivan S.A."/>
            <person name="Kolonay J.F."/>
            <person name="Nelson W.C."/>
            <person name="Tallon L.J."/>
            <person name="Jones K.M."/>
            <person name="Ulrich L.E."/>
            <person name="Gonzalez J.M."/>
            <person name="Zhulin I.B."/>
            <person name="Robb F.T."/>
            <person name="Eisen J.A."/>
        </authorList>
    </citation>
    <scope>NUCLEOTIDE SEQUENCE [LARGE SCALE GENOMIC DNA]</scope>
    <source>
        <strain>ATCC BAA-161 / DSM 6008 / Z-2901</strain>
    </source>
</reference>
<comment type="catalytic activity">
    <reaction evidence="1">
        <text>(2R)-3-phosphoglycerate + ATP = (2R)-3-phospho-glyceroyl phosphate + ADP</text>
        <dbReference type="Rhea" id="RHEA:14801"/>
        <dbReference type="ChEBI" id="CHEBI:30616"/>
        <dbReference type="ChEBI" id="CHEBI:57604"/>
        <dbReference type="ChEBI" id="CHEBI:58272"/>
        <dbReference type="ChEBI" id="CHEBI:456216"/>
        <dbReference type="EC" id="2.7.2.3"/>
    </reaction>
</comment>
<comment type="pathway">
    <text evidence="1">Carbohydrate degradation; glycolysis; pyruvate from D-glyceraldehyde 3-phosphate: step 2/5.</text>
</comment>
<comment type="subunit">
    <text evidence="1">Monomer.</text>
</comment>
<comment type="subcellular location">
    <subcellularLocation>
        <location evidence="1">Cytoplasm</location>
    </subcellularLocation>
</comment>
<comment type="similarity">
    <text evidence="1">Belongs to the phosphoglycerate kinase family.</text>
</comment>
<feature type="chain" id="PRO_1000057973" description="Phosphoglycerate kinase">
    <location>
        <begin position="1"/>
        <end position="394"/>
    </location>
</feature>
<feature type="binding site" evidence="1">
    <location>
        <begin position="21"/>
        <end position="23"/>
    </location>
    <ligand>
        <name>substrate</name>
    </ligand>
</feature>
<feature type="binding site" evidence="1">
    <location>
        <position position="37"/>
    </location>
    <ligand>
        <name>substrate</name>
    </ligand>
</feature>
<feature type="binding site" evidence="1">
    <location>
        <begin position="60"/>
        <end position="63"/>
    </location>
    <ligand>
        <name>substrate</name>
    </ligand>
</feature>
<feature type="binding site" evidence="1">
    <location>
        <position position="119"/>
    </location>
    <ligand>
        <name>substrate</name>
    </ligand>
</feature>
<feature type="binding site" evidence="1">
    <location>
        <position position="152"/>
    </location>
    <ligand>
        <name>substrate</name>
    </ligand>
</feature>
<feature type="binding site" evidence="1">
    <location>
        <position position="202"/>
    </location>
    <ligand>
        <name>ATP</name>
        <dbReference type="ChEBI" id="CHEBI:30616"/>
    </ligand>
</feature>
<feature type="binding site" evidence="1">
    <location>
        <position position="324"/>
    </location>
    <ligand>
        <name>ATP</name>
        <dbReference type="ChEBI" id="CHEBI:30616"/>
    </ligand>
</feature>
<feature type="binding site" evidence="1">
    <location>
        <begin position="350"/>
        <end position="353"/>
    </location>
    <ligand>
        <name>ATP</name>
        <dbReference type="ChEBI" id="CHEBI:30616"/>
    </ligand>
</feature>
<accession>Q3AFD1</accession>
<keyword id="KW-0067">ATP-binding</keyword>
<keyword id="KW-0963">Cytoplasm</keyword>
<keyword id="KW-0324">Glycolysis</keyword>
<keyword id="KW-0418">Kinase</keyword>
<keyword id="KW-0547">Nucleotide-binding</keyword>
<keyword id="KW-1185">Reference proteome</keyword>
<keyword id="KW-0808">Transferase</keyword>
<evidence type="ECO:0000255" key="1">
    <source>
        <dbReference type="HAMAP-Rule" id="MF_00145"/>
    </source>
</evidence>
<organism>
    <name type="scientific">Carboxydothermus hydrogenoformans (strain ATCC BAA-161 / DSM 6008 / Z-2901)</name>
    <dbReference type="NCBI Taxonomy" id="246194"/>
    <lineage>
        <taxon>Bacteria</taxon>
        <taxon>Bacillati</taxon>
        <taxon>Bacillota</taxon>
        <taxon>Clostridia</taxon>
        <taxon>Thermoanaerobacterales</taxon>
        <taxon>Thermoanaerobacteraceae</taxon>
        <taxon>Carboxydothermus</taxon>
    </lineage>
</organism>